<gene>
    <name type="ordered locus">Os02g0504800</name>
    <name type="ordered locus">LOC_Os02g30200</name>
    <name type="ORF">OJ1003_F04.32</name>
    <name type="ORF">OsJ_06845</name>
</gene>
<dbReference type="EC" id="1.14.19.-"/>
<dbReference type="EMBL" id="AP005285">
    <property type="protein sequence ID" value="BAD23230.1"/>
    <property type="status" value="ALT_SEQ"/>
    <property type="molecule type" value="Genomic_DNA"/>
</dbReference>
<dbReference type="EMBL" id="AP008208">
    <property type="protein sequence ID" value="BAF08827.1"/>
    <property type="status" value="ALT_SEQ"/>
    <property type="molecule type" value="Genomic_DNA"/>
</dbReference>
<dbReference type="EMBL" id="AP014958">
    <property type="status" value="NOT_ANNOTATED_CDS"/>
    <property type="molecule type" value="Genomic_DNA"/>
</dbReference>
<dbReference type="EMBL" id="CM000139">
    <property type="protein sequence ID" value="EEE57050.1"/>
    <property type="molecule type" value="Genomic_DNA"/>
</dbReference>
<dbReference type="RefSeq" id="XP_015623425.1">
    <property type="nucleotide sequence ID" value="XM_015767939.1"/>
</dbReference>
<dbReference type="SMR" id="B9F058"/>
<dbReference type="FunCoup" id="B9F058">
    <property type="interactions" value="55"/>
</dbReference>
<dbReference type="STRING" id="39947.B9F058"/>
<dbReference type="PaxDb" id="39947-B9F058"/>
<dbReference type="KEGG" id="dosa:Os02g0504800"/>
<dbReference type="eggNOG" id="ENOG502QRJK">
    <property type="taxonomic scope" value="Eukaryota"/>
</dbReference>
<dbReference type="InParanoid" id="B9F058"/>
<dbReference type="OrthoDB" id="1924153at2759"/>
<dbReference type="UniPathway" id="UPA00199"/>
<dbReference type="Proteomes" id="UP000000763">
    <property type="component" value="Chromosome 2"/>
</dbReference>
<dbReference type="Proteomes" id="UP000007752">
    <property type="component" value="Chromosome 2"/>
</dbReference>
<dbReference type="Proteomes" id="UP000059680">
    <property type="component" value="Chromosome 2"/>
</dbReference>
<dbReference type="GO" id="GO:0009507">
    <property type="term" value="C:chloroplast"/>
    <property type="evidence" value="ECO:0007669"/>
    <property type="project" value="UniProtKB-SubCell"/>
</dbReference>
<dbReference type="GO" id="GO:0046872">
    <property type="term" value="F:metal ion binding"/>
    <property type="evidence" value="ECO:0007669"/>
    <property type="project" value="UniProtKB-KW"/>
</dbReference>
<dbReference type="GO" id="GO:0045300">
    <property type="term" value="F:stearoyl-[ACP] desaturase activity"/>
    <property type="evidence" value="ECO:0000318"/>
    <property type="project" value="GO_Central"/>
</dbReference>
<dbReference type="GO" id="GO:0006633">
    <property type="term" value="P:fatty acid biosynthetic process"/>
    <property type="evidence" value="ECO:0007669"/>
    <property type="project" value="UniProtKB-KW"/>
</dbReference>
<dbReference type="GO" id="GO:0006631">
    <property type="term" value="P:fatty acid metabolic process"/>
    <property type="evidence" value="ECO:0000318"/>
    <property type="project" value="GO_Central"/>
</dbReference>
<dbReference type="CDD" id="cd01050">
    <property type="entry name" value="Acyl_ACP_Desat"/>
    <property type="match status" value="1"/>
</dbReference>
<dbReference type="FunFam" id="1.10.620.20:FF:000002">
    <property type="entry name" value="Stearoyl-[acyl-carrier-protein] 9-desaturase, chloroplastic"/>
    <property type="match status" value="1"/>
</dbReference>
<dbReference type="Gene3D" id="1.10.620.20">
    <property type="entry name" value="Ribonucleotide Reductase, subunit A"/>
    <property type="match status" value="1"/>
</dbReference>
<dbReference type="InterPro" id="IPR005067">
    <property type="entry name" value="Fatty_acid_desaturase-2"/>
</dbReference>
<dbReference type="InterPro" id="IPR009078">
    <property type="entry name" value="Ferritin-like_SF"/>
</dbReference>
<dbReference type="InterPro" id="IPR012348">
    <property type="entry name" value="RNR-like"/>
</dbReference>
<dbReference type="PANTHER" id="PTHR31155">
    <property type="entry name" value="ACYL- ACYL-CARRIER-PROTEIN DESATURASE-RELATED"/>
    <property type="match status" value="1"/>
</dbReference>
<dbReference type="PANTHER" id="PTHR31155:SF8">
    <property type="entry name" value="ACYL-[ACYL-CARRIER-PROTEIN] DESATURASE 3, CHLOROPLASTIC"/>
    <property type="match status" value="1"/>
</dbReference>
<dbReference type="Pfam" id="PF03405">
    <property type="entry name" value="FA_desaturase_2"/>
    <property type="match status" value="1"/>
</dbReference>
<dbReference type="PIRSF" id="PIRSF000346">
    <property type="entry name" value="Dlt9_acylACP_des"/>
    <property type="match status" value="1"/>
</dbReference>
<dbReference type="SUPFAM" id="SSF47240">
    <property type="entry name" value="Ferritin-like"/>
    <property type="match status" value="1"/>
</dbReference>
<comment type="function">
    <text evidence="4">Introduces a cis double bond in the acyl chain of an acyl-[acyl-carrier protein].</text>
</comment>
<comment type="cofactor">
    <cofactor evidence="1">
        <name>Fe(2+)</name>
        <dbReference type="ChEBI" id="CHEBI:29033"/>
    </cofactor>
    <text evidence="1">Binds 2 Fe(2+) ions per subunit.</text>
</comment>
<comment type="pathway">
    <text>Lipid metabolism; fatty acid metabolism.</text>
</comment>
<comment type="subunit">
    <text evidence="1">Homodimer.</text>
</comment>
<comment type="subcellular location">
    <subcellularLocation>
        <location evidence="4">Plastid</location>
        <location evidence="4">Chloroplast</location>
    </subcellularLocation>
</comment>
<comment type="similarity">
    <text evidence="4">Belongs to the fatty acid desaturase type 2 family.</text>
</comment>
<comment type="sequence caution" evidence="4">
    <conflict type="erroneous gene model prediction">
        <sequence resource="EMBL-CDS" id="BAD23230"/>
    </conflict>
</comment>
<comment type="sequence caution" evidence="4">
    <conflict type="erroneous gene model prediction">
        <sequence resource="EMBL-CDS" id="BAF08827"/>
    </conflict>
</comment>
<keyword id="KW-0150">Chloroplast</keyword>
<keyword id="KW-0275">Fatty acid biosynthesis</keyword>
<keyword id="KW-0276">Fatty acid metabolism</keyword>
<keyword id="KW-0408">Iron</keyword>
<keyword id="KW-0444">Lipid biosynthesis</keyword>
<keyword id="KW-0443">Lipid metabolism</keyword>
<keyword id="KW-0479">Metal-binding</keyword>
<keyword id="KW-0560">Oxidoreductase</keyword>
<keyword id="KW-0934">Plastid</keyword>
<keyword id="KW-1185">Reference proteome</keyword>
<keyword id="KW-0809">Transit peptide</keyword>
<reference key="1">
    <citation type="journal article" date="2005" name="Nature">
        <title>The map-based sequence of the rice genome.</title>
        <authorList>
            <consortium name="International rice genome sequencing project (IRGSP)"/>
        </authorList>
    </citation>
    <scope>NUCLEOTIDE SEQUENCE [LARGE SCALE GENOMIC DNA]</scope>
    <source>
        <strain>cv. Nipponbare</strain>
    </source>
</reference>
<reference key="2">
    <citation type="journal article" date="2008" name="Nucleic Acids Res.">
        <title>The rice annotation project database (RAP-DB): 2008 update.</title>
        <authorList>
            <consortium name="The rice annotation project (RAP)"/>
        </authorList>
    </citation>
    <scope>GENOME REANNOTATION</scope>
    <source>
        <strain>cv. Nipponbare</strain>
    </source>
</reference>
<reference key="3">
    <citation type="journal article" date="2013" name="Rice">
        <title>Improvement of the Oryza sativa Nipponbare reference genome using next generation sequence and optical map data.</title>
        <authorList>
            <person name="Kawahara Y."/>
            <person name="de la Bastide M."/>
            <person name="Hamilton J.P."/>
            <person name="Kanamori H."/>
            <person name="McCombie W.R."/>
            <person name="Ouyang S."/>
            <person name="Schwartz D.C."/>
            <person name="Tanaka T."/>
            <person name="Wu J."/>
            <person name="Zhou S."/>
            <person name="Childs K.L."/>
            <person name="Davidson R.M."/>
            <person name="Lin H."/>
            <person name="Quesada-Ocampo L."/>
            <person name="Vaillancourt B."/>
            <person name="Sakai H."/>
            <person name="Lee S.S."/>
            <person name="Kim J."/>
            <person name="Numa H."/>
            <person name="Itoh T."/>
            <person name="Buell C.R."/>
            <person name="Matsumoto T."/>
        </authorList>
    </citation>
    <scope>GENOME REANNOTATION</scope>
    <source>
        <strain>cv. Nipponbare</strain>
    </source>
</reference>
<reference key="4">
    <citation type="journal article" date="2005" name="PLoS Biol.">
        <title>The genomes of Oryza sativa: a history of duplications.</title>
        <authorList>
            <person name="Yu J."/>
            <person name="Wang J."/>
            <person name="Lin W."/>
            <person name="Li S."/>
            <person name="Li H."/>
            <person name="Zhou J."/>
            <person name="Ni P."/>
            <person name="Dong W."/>
            <person name="Hu S."/>
            <person name="Zeng C."/>
            <person name="Zhang J."/>
            <person name="Zhang Y."/>
            <person name="Li R."/>
            <person name="Xu Z."/>
            <person name="Li S."/>
            <person name="Li X."/>
            <person name="Zheng H."/>
            <person name="Cong L."/>
            <person name="Lin L."/>
            <person name="Yin J."/>
            <person name="Geng J."/>
            <person name="Li G."/>
            <person name="Shi J."/>
            <person name="Liu J."/>
            <person name="Lv H."/>
            <person name="Li J."/>
            <person name="Wang J."/>
            <person name="Deng Y."/>
            <person name="Ran L."/>
            <person name="Shi X."/>
            <person name="Wang X."/>
            <person name="Wu Q."/>
            <person name="Li C."/>
            <person name="Ren X."/>
            <person name="Wang J."/>
            <person name="Wang X."/>
            <person name="Li D."/>
            <person name="Liu D."/>
            <person name="Zhang X."/>
            <person name="Ji Z."/>
            <person name="Zhao W."/>
            <person name="Sun Y."/>
            <person name="Zhang Z."/>
            <person name="Bao J."/>
            <person name="Han Y."/>
            <person name="Dong L."/>
            <person name="Ji J."/>
            <person name="Chen P."/>
            <person name="Wu S."/>
            <person name="Liu J."/>
            <person name="Xiao Y."/>
            <person name="Bu D."/>
            <person name="Tan J."/>
            <person name="Yang L."/>
            <person name="Ye C."/>
            <person name="Zhang J."/>
            <person name="Xu J."/>
            <person name="Zhou Y."/>
            <person name="Yu Y."/>
            <person name="Zhang B."/>
            <person name="Zhuang S."/>
            <person name="Wei H."/>
            <person name="Liu B."/>
            <person name="Lei M."/>
            <person name="Yu H."/>
            <person name="Li Y."/>
            <person name="Xu H."/>
            <person name="Wei S."/>
            <person name="He X."/>
            <person name="Fang L."/>
            <person name="Zhang Z."/>
            <person name="Zhang Y."/>
            <person name="Huang X."/>
            <person name="Su Z."/>
            <person name="Tong W."/>
            <person name="Li J."/>
            <person name="Tong Z."/>
            <person name="Li S."/>
            <person name="Ye J."/>
            <person name="Wang L."/>
            <person name="Fang L."/>
            <person name="Lei T."/>
            <person name="Chen C.-S."/>
            <person name="Chen H.-C."/>
            <person name="Xu Z."/>
            <person name="Li H."/>
            <person name="Huang H."/>
            <person name="Zhang F."/>
            <person name="Xu H."/>
            <person name="Li N."/>
            <person name="Zhao C."/>
            <person name="Li S."/>
            <person name="Dong L."/>
            <person name="Huang Y."/>
            <person name="Li L."/>
            <person name="Xi Y."/>
            <person name="Qi Q."/>
            <person name="Li W."/>
            <person name="Zhang B."/>
            <person name="Hu W."/>
            <person name="Zhang Y."/>
            <person name="Tian X."/>
            <person name="Jiao Y."/>
            <person name="Liang X."/>
            <person name="Jin J."/>
            <person name="Gao L."/>
            <person name="Zheng W."/>
            <person name="Hao B."/>
            <person name="Liu S.-M."/>
            <person name="Wang W."/>
            <person name="Yuan L."/>
            <person name="Cao M."/>
            <person name="McDermott J."/>
            <person name="Samudrala R."/>
            <person name="Wang J."/>
            <person name="Wong G.K.-S."/>
            <person name="Yang H."/>
        </authorList>
    </citation>
    <scope>NUCLEOTIDE SEQUENCE [LARGE SCALE GENOMIC DNA]</scope>
    <source>
        <strain>cv. Nipponbare</strain>
    </source>
</reference>
<reference key="5">
    <citation type="journal article" date="2009" name="Mol. Plant Microbe Interact.">
        <title>Suppression of the rice fatty-acid desaturase gene OsSSI2 enhances resistance to blast and leaf blight diseases in rice.</title>
        <authorList>
            <person name="Jiang C.J."/>
            <person name="Shimono M."/>
            <person name="Maeda S."/>
            <person name="Inoue H."/>
            <person name="Mori M."/>
            <person name="Hasegawa M."/>
            <person name="Sugano S."/>
            <person name="Takatsuji H."/>
        </authorList>
    </citation>
    <scope>GENE FAMILY</scope>
</reference>
<proteinExistence type="evidence at transcript level"/>
<protein>
    <recommendedName>
        <fullName>Acyl-[acyl-carrier-protein] desaturase 3, chloroplastic</fullName>
        <ecNumber>1.14.19.-</ecNumber>
    </recommendedName>
</protein>
<name>STAD3_ORYSJ</name>
<sequence>MSLTGCLPPRPPCSMRRRTSGGGASVSPVVAMASTAGVGGIGNPTPRGKKPFAPWREVPPQVTHTLPPEKKEVFDSLEGWAADTILPYLKPVEESWQPQDHLPDPRSPSFGDEVAALRERAAGLPDDHLVCLVGDMVTEEALPTYQTMLNTMDGGVRDETGAGGSAWAVWTRAWAAEENRHGDLMNKYLYLTGRVDMRQVEKTIQYLIGSGMDPRTENDPYMGFIYTTFQERATSISHGNTARHAGRHGDAALARVCGTVAADEKRHEAAYAAIVAKLFEVDPDYTVRAFARMMRRKVAMPARLMYDGADDRLFARFAAVAQRLGVYTAADYAGIIEFLVARWGVPGLAAGLSGEGRRAQDFVCSLGPRFRRMEERAQEAAKRAPPAAAAPFSWIHGRQVQL</sequence>
<accession>B9F058</accession>
<accession>Q0E111</accession>
<accession>Q6K650</accession>
<organism>
    <name type="scientific">Oryza sativa subsp. japonica</name>
    <name type="common">Rice</name>
    <dbReference type="NCBI Taxonomy" id="39947"/>
    <lineage>
        <taxon>Eukaryota</taxon>
        <taxon>Viridiplantae</taxon>
        <taxon>Streptophyta</taxon>
        <taxon>Embryophyta</taxon>
        <taxon>Tracheophyta</taxon>
        <taxon>Spermatophyta</taxon>
        <taxon>Magnoliopsida</taxon>
        <taxon>Liliopsida</taxon>
        <taxon>Poales</taxon>
        <taxon>Poaceae</taxon>
        <taxon>BOP clade</taxon>
        <taxon>Oryzoideae</taxon>
        <taxon>Oryzeae</taxon>
        <taxon>Oryzinae</taxon>
        <taxon>Oryza</taxon>
        <taxon>Oryza sativa</taxon>
    </lineage>
</organism>
<feature type="transit peptide" description="Chloroplast" evidence="2">
    <location>
        <begin position="1"/>
        <end position="32"/>
    </location>
</feature>
<feature type="chain" id="PRO_0000401430" description="Acyl-[acyl-carrier-protein] desaturase 3, chloroplastic">
    <location>
        <begin position="33"/>
        <end position="402"/>
    </location>
</feature>
<feature type="region of interest" description="Disordered" evidence="3">
    <location>
        <begin position="1"/>
        <end position="66"/>
    </location>
</feature>
<feature type="binding site" evidence="1">
    <location>
        <position position="139"/>
    </location>
    <ligand>
        <name>Fe cation</name>
        <dbReference type="ChEBI" id="CHEBI:24875"/>
        <label>1</label>
    </ligand>
</feature>
<feature type="binding site" evidence="1">
    <location>
        <position position="178"/>
    </location>
    <ligand>
        <name>Fe cation</name>
        <dbReference type="ChEBI" id="CHEBI:24875"/>
        <label>1</label>
    </ligand>
</feature>
<feature type="binding site" evidence="1">
    <location>
        <position position="178"/>
    </location>
    <ligand>
        <name>Fe cation</name>
        <dbReference type="ChEBI" id="CHEBI:24875"/>
        <label>2</label>
    </ligand>
</feature>
<feature type="binding site" evidence="1">
    <location>
        <position position="181"/>
    </location>
    <ligand>
        <name>Fe cation</name>
        <dbReference type="ChEBI" id="CHEBI:24875"/>
        <label>1</label>
    </ligand>
</feature>
<feature type="binding site" evidence="1">
    <location>
        <position position="231"/>
    </location>
    <ligand>
        <name>Fe cation</name>
        <dbReference type="ChEBI" id="CHEBI:24875"/>
        <label>2</label>
    </ligand>
</feature>
<feature type="binding site" evidence="1">
    <location>
        <position position="264"/>
    </location>
    <ligand>
        <name>Fe cation</name>
        <dbReference type="ChEBI" id="CHEBI:24875"/>
        <label>1</label>
    </ligand>
</feature>
<feature type="binding site" evidence="1">
    <location>
        <position position="264"/>
    </location>
    <ligand>
        <name>Fe cation</name>
        <dbReference type="ChEBI" id="CHEBI:24875"/>
        <label>2</label>
    </ligand>
</feature>
<feature type="binding site" evidence="1">
    <location>
        <position position="267"/>
    </location>
    <ligand>
        <name>Fe cation</name>
        <dbReference type="ChEBI" id="CHEBI:24875"/>
        <label>2</label>
    </ligand>
</feature>
<evidence type="ECO:0000250" key="1">
    <source>
        <dbReference type="UniProtKB" id="P22337"/>
    </source>
</evidence>
<evidence type="ECO:0000255" key="2"/>
<evidence type="ECO:0000256" key="3">
    <source>
        <dbReference type="SAM" id="MobiDB-lite"/>
    </source>
</evidence>
<evidence type="ECO:0000305" key="4"/>